<comment type="function">
    <text evidence="10">Involved in the organization of myofibers. Together with KRT8, helps to link the contractile apparatus to dystrophin at the costameres of striated muscle.</text>
</comment>
<comment type="subunit">
    <text evidence="6 10">Heterotetramer of two type I and two type II keratins. Interacts with PNN and the actin-binding domain of DMD. Interacts with HCV core protein.</text>
</comment>
<comment type="subunit">
    <text evidence="9">(Microbial infection) Interacts with hepatitis C virus/HCV core protein.</text>
</comment>
<comment type="interaction">
    <interactant intactId="EBI-742756">
        <id>P08727</id>
    </interactant>
    <interactant intactId="EBI-743598">
        <id>Q9NYB9</id>
        <label>ABI2</label>
    </interactant>
    <organismsDiffer>false</organismsDiffer>
    <experiments>3</experiments>
</comment>
<comment type="interaction">
    <interactant intactId="EBI-742756">
        <id>P08727</id>
    </interactant>
    <interactant intactId="EBI-11096309">
        <id>Q9NYB9-2</id>
        <label>ABI2</label>
    </interactant>
    <organismsDiffer>false</organismsDiffer>
    <experiments>3</experiments>
</comment>
<comment type="interaction">
    <interactant intactId="EBI-742756">
        <id>P08727</id>
    </interactant>
    <interactant intactId="EBI-8643161">
        <id>Q9NX04</id>
        <label>AIRIM</label>
    </interactant>
    <organismsDiffer>false</organismsDiffer>
    <experiments>6</experiments>
</comment>
<comment type="interaction">
    <interactant intactId="EBI-742756">
        <id>P08727</id>
    </interactant>
    <interactant intactId="EBI-17286414">
        <id>A2BDD9</id>
        <label>AMOT</label>
    </interactant>
    <organismsDiffer>false</organismsDiffer>
    <experiments>3</experiments>
</comment>
<comment type="interaction">
    <interactant intactId="EBI-742756">
        <id>P08727</id>
    </interactant>
    <interactant intactId="EBI-10187270">
        <id>Q9Y2J4-4</id>
        <label>AMOTL2</label>
    </interactant>
    <organismsDiffer>false</organismsDiffer>
    <experiments>3</experiments>
</comment>
<comment type="interaction">
    <interactant intactId="EBI-742756">
        <id>P08727</id>
    </interactant>
    <interactant intactId="EBI-2875746">
        <id>P40617</id>
        <label>ARL4A</label>
    </interactant>
    <organismsDiffer>false</organismsDiffer>
    <experiments>3</experiments>
</comment>
<comment type="interaction">
    <interactant intactId="EBI-742756">
        <id>P08727</id>
    </interactant>
    <interactant intactId="EBI-11282723">
        <id>Q9Y5Z0</id>
        <label>BACE2</label>
    </interactant>
    <organismsDiffer>false</organismsDiffer>
    <experiments>3</experiments>
</comment>
<comment type="interaction">
    <interactant intactId="EBI-742756">
        <id>P08727</id>
    </interactant>
    <interactant intactId="EBI-745073">
        <id>Q9BXY8</id>
        <label>BEX2</label>
    </interactant>
    <organismsDiffer>false</organismsDiffer>
    <experiments>3</experiments>
</comment>
<comment type="interaction">
    <interactant intactId="EBI-742756">
        <id>P08727</id>
    </interactant>
    <interactant intactId="EBI-751319">
        <id>Q9H257</id>
        <label>CARD9</label>
    </interactant>
    <organismsDiffer>false</organismsDiffer>
    <experiments>4</experiments>
</comment>
<comment type="interaction">
    <interactant intactId="EBI-742756">
        <id>P08727</id>
    </interactant>
    <interactant intactId="EBI-10247802">
        <id>Q8IYE0-2</id>
        <label>CCDC146</label>
    </interactant>
    <organismsDiffer>false</organismsDiffer>
    <experiments>3</experiments>
</comment>
<comment type="interaction">
    <interactant intactId="EBI-742756">
        <id>P08727</id>
    </interactant>
    <interactant intactId="EBI-10175300">
        <id>Q8TD31-3</id>
        <label>CCHCR1</label>
    </interactant>
    <organismsDiffer>false</organismsDiffer>
    <experiments>3</experiments>
</comment>
<comment type="interaction">
    <interactant intactId="EBI-742756">
        <id>P08727</id>
    </interactant>
    <interactant intactId="EBI-10181988">
        <id>Q8IYX8-2</id>
        <label>CEP57L1</label>
    </interactant>
    <organismsDiffer>false</organismsDiffer>
    <experiments>3</experiments>
</comment>
<comment type="interaction">
    <interactant intactId="EBI-742756">
        <id>P08727</id>
    </interactant>
    <interactant intactId="EBI-25837549">
        <id>P28329-3</id>
        <label>CHAT</label>
    </interactant>
    <organismsDiffer>false</organismsDiffer>
    <experiments>3</experiments>
</comment>
<comment type="interaction">
    <interactant intactId="EBI-742756">
        <id>P08727</id>
    </interactant>
    <interactant intactId="EBI-742413">
        <id>Q9BT78</id>
        <label>COPS4</label>
    </interactant>
    <organismsDiffer>false</organismsDiffer>
    <experiments>3</experiments>
</comment>
<comment type="interaction">
    <interactant intactId="EBI-742756">
        <id>P08727</id>
    </interactant>
    <interactant intactId="EBI-8589586">
        <id>P09172</id>
        <label>DBH</label>
    </interactant>
    <organismsDiffer>false</organismsDiffer>
    <experiments>3</experiments>
</comment>
<comment type="interaction">
    <interactant intactId="EBI-742756">
        <id>P08727</id>
    </interactant>
    <interactant intactId="EBI-295827">
        <id>P11532</id>
        <label>DMD</label>
    </interactant>
    <organismsDiffer>false</organismsDiffer>
    <experiments>2</experiments>
</comment>
<comment type="interaction">
    <interactant intactId="EBI-742756">
        <id>P08727</id>
    </interactant>
    <interactant intactId="EBI-398610">
        <id>O60573</id>
        <label>EIF4E2</label>
    </interactant>
    <organismsDiffer>false</organismsDiffer>
    <experiments>3</experiments>
</comment>
<comment type="interaction">
    <interactant intactId="EBI-742756">
        <id>P08727</id>
    </interactant>
    <interactant intactId="EBI-301024">
        <id>Q9NRA8</id>
        <label>EIF4ENIF1</label>
    </interactant>
    <organismsDiffer>false</organismsDiffer>
    <experiments>3</experiments>
</comment>
<comment type="interaction">
    <interactant intactId="EBI-742756">
        <id>P08727</id>
    </interactant>
    <interactant intactId="EBI-742102">
        <id>Q8IYI6</id>
        <label>EXOC8</label>
    </interactant>
    <organismsDiffer>false</organismsDiffer>
    <experiments>4</experiments>
</comment>
<comment type="interaction">
    <interactant intactId="EBI-742756">
        <id>P08727</id>
    </interactant>
    <interactant intactId="EBI-741626">
        <id>Q9H5Z6</id>
        <label>FAM124B</label>
    </interactant>
    <organismsDiffer>false</organismsDiffer>
    <experiments>3</experiments>
</comment>
<comment type="interaction">
    <interactant intactId="EBI-742756">
        <id>P08727</id>
    </interactant>
    <interactant intactId="EBI-348399">
        <id>P22607</id>
        <label>FGFR3</label>
    </interactant>
    <organismsDiffer>false</organismsDiffer>
    <experiments>3</experiments>
</comment>
<comment type="interaction">
    <interactant intactId="EBI-742756">
        <id>P08727</id>
    </interactant>
    <interactant intactId="EBI-744302">
        <id>P14136</id>
        <label>GFAP</label>
    </interactant>
    <organismsDiffer>false</organismsDiffer>
    <experiments>9</experiments>
</comment>
<comment type="interaction">
    <interactant intactId="EBI-742756">
        <id>P08727</id>
    </interactant>
    <interactant intactId="EBI-748515">
        <id>Q8IVS8</id>
        <label>GLYCTK</label>
    </interactant>
    <organismsDiffer>false</organismsDiffer>
    <experiments>3</experiments>
</comment>
<comment type="interaction">
    <interactant intactId="EBI-742756">
        <id>P08727</id>
    </interactant>
    <interactant intactId="EBI-351506">
        <id>P06396</id>
        <label>GSN</label>
    </interactant>
    <organismsDiffer>false</organismsDiffer>
    <experiments>3</experiments>
</comment>
<comment type="interaction">
    <interactant intactId="EBI-742756">
        <id>P08727</id>
    </interactant>
    <interactant intactId="EBI-2514791">
        <id>Q96CS2</id>
        <label>HAUS1</label>
    </interactant>
    <organismsDiffer>false</organismsDiffer>
    <experiments>3</experiments>
</comment>
<comment type="interaction">
    <interactant intactId="EBI-742756">
        <id>P08727</id>
    </interactant>
    <interactant intactId="EBI-740220">
        <id>O14964</id>
        <label>HGS</label>
    </interactant>
    <organismsDiffer>false</organismsDiffer>
    <experiments>4</experiments>
</comment>
<comment type="interaction">
    <interactant intactId="EBI-742756">
        <id>P08727</id>
    </interactant>
    <interactant intactId="EBI-350145">
        <id>P01112</id>
        <label>HRAS</label>
    </interactant>
    <organismsDiffer>false</organismsDiffer>
    <experiments>3</experiments>
</comment>
<comment type="interaction">
    <interactant intactId="EBI-742756">
        <id>P08727</id>
    </interactant>
    <interactant intactId="EBI-517086">
        <id>O43464</id>
        <label>HTRA2</label>
    </interactant>
    <organismsDiffer>false</organismsDiffer>
    <experiments>3</experiments>
</comment>
<comment type="interaction">
    <interactant intactId="EBI-742756">
        <id>P08727</id>
    </interactant>
    <interactant intactId="EBI-466029">
        <id>P42858</id>
        <label>HTT</label>
    </interactant>
    <organismsDiffer>false</organismsDiffer>
    <experiments>6</experiments>
</comment>
<comment type="interaction">
    <interactant intactId="EBI-742756">
        <id>P08727</id>
    </interactant>
    <interactant intactId="EBI-747204">
        <id>Q9UKT9</id>
        <label>IKZF3</label>
    </interactant>
    <organismsDiffer>false</organismsDiffer>
    <experiments>3</experiments>
</comment>
<comment type="interaction">
    <interactant intactId="EBI-742756">
        <id>P08727</id>
    </interactant>
    <interactant intactId="EBI-1055254">
        <id>Q8WXH2</id>
        <label>JPH3</label>
    </interactant>
    <organismsDiffer>false</organismsDiffer>
    <experiments>3</experiments>
</comment>
<comment type="interaction">
    <interactant intactId="EBI-742756">
        <id>P08727</id>
    </interactant>
    <interactant intactId="EBI-2125614">
        <id>Q9BVG8</id>
        <label>KIFC3</label>
    </interactant>
    <organismsDiffer>false</organismsDiffer>
    <experiments>3</experiments>
</comment>
<comment type="interaction">
    <interactant intactId="EBI-742756">
        <id>P08727</id>
    </interactant>
    <interactant intactId="EBI-2432309">
        <id>Q92876</id>
        <label>KLK6</label>
    </interactant>
    <organismsDiffer>false</organismsDiffer>
    <experiments>3</experiments>
</comment>
<comment type="interaction">
    <interactant intactId="EBI-742756">
        <id>P08727</id>
    </interactant>
    <interactant intactId="EBI-298429">
        <id>P04264</id>
        <label>KRT1</label>
    </interactant>
    <organismsDiffer>false</organismsDiffer>
    <experiments>3</experiments>
</comment>
<comment type="interaction">
    <interactant intactId="EBI-742756">
        <id>P08727</id>
    </interactant>
    <interactant intactId="EBI-1247312">
        <id>P35908</id>
        <label>KRT2</label>
    </interactant>
    <organismsDiffer>false</organismsDiffer>
    <experiments>10</experiments>
</comment>
<comment type="interaction">
    <interactant intactId="EBI-742756">
        <id>P08727</id>
    </interactant>
    <interactant intactId="EBI-2430095">
        <id>P12035</id>
        <label>KRT3</label>
    </interactant>
    <organismsDiffer>false</organismsDiffer>
    <experiments>3</experiments>
</comment>
<comment type="interaction">
    <interactant intactId="EBI-742756">
        <id>P08727</id>
    </interactant>
    <interactant intactId="EBI-2371606">
        <id>P19013</id>
        <label>KRT4</label>
    </interactant>
    <organismsDiffer>false</organismsDiffer>
    <experiments>3</experiments>
</comment>
<comment type="interaction">
    <interactant intactId="EBI-742756">
        <id>P08727</id>
    </interactant>
    <interactant intactId="EBI-702187">
        <id>P13647</id>
        <label>KRT5</label>
    </interactant>
    <organismsDiffer>false</organismsDiffer>
    <experiments>3</experiments>
</comment>
<comment type="interaction">
    <interactant intactId="EBI-742756">
        <id>P08727</id>
    </interactant>
    <interactant intactId="EBI-702198">
        <id>P02538</id>
        <label>KRT6A</label>
    </interactant>
    <organismsDiffer>false</organismsDiffer>
    <experiments>5</experiments>
</comment>
<comment type="interaction">
    <interactant intactId="EBI-742756">
        <id>P08727</id>
    </interactant>
    <interactant intactId="EBI-740907">
        <id>P04259</id>
        <label>KRT6B</label>
    </interactant>
    <organismsDiffer>false</organismsDiffer>
    <experiments>4</experiments>
</comment>
<comment type="interaction">
    <interactant intactId="EBI-742756">
        <id>P08727</id>
    </interactant>
    <interactant intactId="EBI-2564105">
        <id>P48668</id>
        <label>KRT6C</label>
    </interactant>
    <organismsDiffer>false</organismsDiffer>
    <experiments>3</experiments>
</comment>
<comment type="interaction">
    <interactant intactId="EBI-742756">
        <id>P08727</id>
    </interactant>
    <interactant intactId="EBI-2952676">
        <id>Q3SY84</id>
        <label>KRT71</label>
    </interactant>
    <organismsDiffer>false</organismsDiffer>
    <experiments>3</experiments>
</comment>
<comment type="interaction">
    <interactant intactId="EBI-742756">
        <id>P08727</id>
    </interactant>
    <interactant intactId="EBI-1221280">
        <id>Q14CN4</id>
        <label>KRT72</label>
    </interactant>
    <organismsDiffer>false</organismsDiffer>
    <experiments>3</experiments>
</comment>
<comment type="interaction">
    <interactant intactId="EBI-742756">
        <id>P08727</id>
    </interactant>
    <interactant intactId="EBI-968660">
        <id>Q7RTS7</id>
        <label>KRT74</label>
    </interactant>
    <organismsDiffer>false</organismsDiffer>
    <experiments>3</experiments>
</comment>
<comment type="interaction">
    <interactant intactId="EBI-742756">
        <id>P08727</id>
    </interactant>
    <interactant intactId="EBI-2949715">
        <id>O95678</id>
        <label>KRT75</label>
    </interactant>
    <organismsDiffer>false</organismsDiffer>
    <experiments>3</experiments>
</comment>
<comment type="interaction">
    <interactant intactId="EBI-742756">
        <id>P08727</id>
    </interactant>
    <interactant intactId="EBI-3045529">
        <id>Q7Z794</id>
        <label>KRT77</label>
    </interactant>
    <organismsDiffer>false</organismsDiffer>
    <experiments>3</experiments>
</comment>
<comment type="interaction">
    <interactant intactId="EBI-742756">
        <id>P08727</id>
    </interactant>
    <interactant intactId="EBI-1056564">
        <id>Q8N1N4</id>
        <label>KRT78</label>
    </interactant>
    <organismsDiffer>false</organismsDiffer>
    <experiments>3</experiments>
</comment>
<comment type="interaction">
    <interactant intactId="EBI-742756">
        <id>P08727</id>
    </interactant>
    <interactant intactId="EBI-2514135">
        <id>Q5XKE5</id>
        <label>KRT79</label>
    </interactant>
    <organismsDiffer>false</organismsDiffer>
    <experiments>3</experiments>
</comment>
<comment type="interaction">
    <interactant intactId="EBI-742756">
        <id>P08727</id>
    </interactant>
    <interactant intactId="EBI-297852">
        <id>P05787</id>
        <label>KRT8</label>
    </interactant>
    <organismsDiffer>false</organismsDiffer>
    <experiments>3</experiments>
</comment>
<comment type="interaction">
    <interactant intactId="EBI-742756">
        <id>P08727</id>
    </interactant>
    <interactant intactId="EBI-11999246">
        <id>Q6KB66-2</id>
        <label>KRT80</label>
    </interactant>
    <organismsDiffer>false</organismsDiffer>
    <experiments>5</experiments>
</comment>
<comment type="interaction">
    <interactant intactId="EBI-742756">
        <id>P08727</id>
    </interactant>
    <interactant intactId="EBI-739648">
        <id>Q14533</id>
        <label>KRT81</label>
    </interactant>
    <organismsDiffer>false</organismsDiffer>
    <experiments>3</experiments>
</comment>
<comment type="interaction">
    <interactant intactId="EBI-742756">
        <id>P08727</id>
    </interactant>
    <interactant intactId="EBI-10221390">
        <id>P78385</id>
        <label>KRT83</label>
    </interactant>
    <organismsDiffer>false</organismsDiffer>
    <experiments>3</experiments>
</comment>
<comment type="interaction">
    <interactant intactId="EBI-742756">
        <id>P08727</id>
    </interactant>
    <interactant intactId="EBI-1049371">
        <id>P78386</id>
        <label>KRT85</label>
    </interactant>
    <organismsDiffer>false</organismsDiffer>
    <experiments>3</experiments>
</comment>
<comment type="interaction">
    <interactant intactId="EBI-742756">
        <id>P08727</id>
    </interactant>
    <interactant intactId="EBI-9996498">
        <id>O43790</id>
        <label>KRT86</label>
    </interactant>
    <organismsDiffer>false</organismsDiffer>
    <experiments>3</experiments>
</comment>
<comment type="interaction">
    <interactant intactId="EBI-742756">
        <id>P08727</id>
    </interactant>
    <interactant intactId="EBI-726510">
        <id>Q96BZ8</id>
        <label>LENG1</label>
    </interactant>
    <organismsDiffer>false</organismsDiffer>
    <experiments>3</experiments>
</comment>
<comment type="interaction">
    <interactant intactId="EBI-742756">
        <id>P08727</id>
    </interactant>
    <interactant intactId="EBI-10274069">
        <id>Q8TCE9</id>
        <label>LGALS14</label>
    </interactant>
    <organismsDiffer>false</organismsDiffer>
    <experiments>3</experiments>
</comment>
<comment type="interaction">
    <interactant intactId="EBI-742756">
        <id>P08727</id>
    </interactant>
    <interactant intactId="EBI-475646">
        <id>P07196</id>
        <label>NEFL</label>
    </interactant>
    <organismsDiffer>false</organismsDiffer>
    <experiments>3</experiments>
</comment>
<comment type="interaction">
    <interactant intactId="EBI-742756">
        <id>P08727</id>
    </interactant>
    <interactant intactId="EBI-10271199">
        <id>Q8NI38</id>
        <label>NFKBID</label>
    </interactant>
    <organismsDiffer>false</organismsDiffer>
    <experiments>3</experiments>
</comment>
<comment type="interaction">
    <interactant intactId="EBI-742756">
        <id>P08727</id>
    </interactant>
    <interactant intactId="EBI-12012016">
        <id>Q9Y5F1</id>
        <label>PCDHB12</label>
    </interactant>
    <organismsDiffer>false</organismsDiffer>
    <experiments>3</experiments>
</comment>
<comment type="interaction">
    <interactant intactId="EBI-742756">
        <id>P08727</id>
    </interactant>
    <interactant intactId="EBI-602382">
        <id>Q16512</id>
        <label>PKN1</label>
    </interactant>
    <organismsDiffer>false</organismsDiffer>
    <experiments>3</experiments>
</comment>
<comment type="interaction">
    <interactant intactId="EBI-742756">
        <id>P08727</id>
    </interactant>
    <interactant intactId="EBI-10320765">
        <id>Q9UGP5-2</id>
        <label>POLL</label>
    </interactant>
    <organismsDiffer>false</organismsDiffer>
    <experiments>3</experiments>
</comment>
<comment type="interaction">
    <interactant intactId="EBI-742756">
        <id>P08727</id>
    </interactant>
    <interactant intactId="EBI-1055079">
        <id>O15160</id>
        <label>POLR1C</label>
    </interactant>
    <organismsDiffer>false</organismsDiffer>
    <experiments>3</experiments>
</comment>
<comment type="interaction">
    <interactant intactId="EBI-742756">
        <id>P08727</id>
    </interactant>
    <interactant intactId="EBI-2557469">
        <id>Q6NYC8</id>
        <label>PPP1R18</label>
    </interactant>
    <organismsDiffer>false</organismsDiffer>
    <experiments>3</experiments>
</comment>
<comment type="interaction">
    <interactant intactId="EBI-742756">
        <id>P08727</id>
    </interactant>
    <interactant intactId="EBI-949799">
        <id>P05129</id>
        <label>PRKCG</label>
    </interactant>
    <organismsDiffer>false</organismsDiffer>
    <experiments>3</experiments>
</comment>
<comment type="interaction">
    <interactant intactId="EBI-742756">
        <id>P08727</id>
    </interactant>
    <interactant intactId="EBI-752074">
        <id>P41219</id>
        <label>PRPH</label>
    </interactant>
    <organismsDiffer>false</organismsDiffer>
    <experiments>6</experiments>
</comment>
<comment type="interaction">
    <interactant intactId="EBI-742756">
        <id>P08727</id>
    </interactant>
    <interactant intactId="EBI-359352">
        <id>P25786</id>
        <label>PSMA1</label>
    </interactant>
    <organismsDiffer>false</organismsDiffer>
    <experiments>3</experiments>
</comment>
<comment type="interaction">
    <interactant intactId="EBI-742756">
        <id>P08727</id>
    </interactant>
    <interactant intactId="EBI-1504830">
        <id>Q9P2K3-2</id>
        <label>RCOR3</label>
    </interactant>
    <organismsDiffer>false</organismsDiffer>
    <experiments>3</experiments>
</comment>
<comment type="interaction">
    <interactant intactId="EBI-742756">
        <id>P08727</id>
    </interactant>
    <interactant intactId="EBI-743117">
        <id>Q96ES7</id>
        <label>SGF29</label>
    </interactant>
    <organismsDiffer>false</organismsDiffer>
    <experiments>5</experiments>
</comment>
<comment type="interaction">
    <interactant intactId="EBI-742756">
        <id>P08727</id>
    </interactant>
    <interactant intactId="EBI-455078">
        <id>Q969G3</id>
        <label>SMARCE1</label>
    </interactant>
    <organismsDiffer>false</organismsDiffer>
    <experiments>3</experiments>
</comment>
<comment type="interaction">
    <interactant intactId="EBI-742756">
        <id>P08727</id>
    </interactant>
    <interactant intactId="EBI-296723">
        <id>O95295</id>
        <label>SNAPIN</label>
    </interactant>
    <organismsDiffer>false</organismsDiffer>
    <experiments>3</experiments>
</comment>
<comment type="interaction">
    <interactant intactId="EBI-742756">
        <id>P08727</id>
    </interactant>
    <interactant intactId="EBI-742688">
        <id>Q9NZD8</id>
        <label>SPG21</label>
    </interactant>
    <organismsDiffer>false</organismsDiffer>
    <experiments>3</experiments>
</comment>
<comment type="interaction">
    <interactant intactId="EBI-742756">
        <id>P08727</id>
    </interactant>
    <interactant intactId="EBI-3258000">
        <id>Q9P0N9</id>
        <label>TBC1D7</label>
    </interactant>
    <organismsDiffer>false</organismsDiffer>
    <experiments>7</experiments>
</comment>
<comment type="interaction">
    <interactant intactId="EBI-742756">
        <id>P08727</id>
    </interactant>
    <interactant intactId="EBI-740781">
        <id>Q9BT92</id>
        <label>TCHP</label>
    </interactant>
    <organismsDiffer>false</organismsDiffer>
    <experiments>3</experiments>
</comment>
<comment type="interaction">
    <interactant intactId="EBI-742756">
        <id>P08727</id>
    </interactant>
    <interactant intactId="EBI-10178002">
        <id>P0C1Z6-2</id>
        <label>TFPT</label>
    </interactant>
    <organismsDiffer>false</organismsDiffer>
    <experiments>3</experiments>
</comment>
<comment type="interaction">
    <interactant intactId="EBI-742756">
        <id>P08727</id>
    </interactant>
    <interactant intactId="EBI-727668">
        <id>P21980</id>
        <label>TGM2</label>
    </interactant>
    <organismsDiffer>false</organismsDiffer>
    <experiments>2</experiments>
</comment>
<comment type="interaction">
    <interactant intactId="EBI-742756">
        <id>P08727</id>
    </interactant>
    <interactant intactId="EBI-10180829">
        <id>Q7KZS0</id>
        <label>UBE2I</label>
    </interactant>
    <organismsDiffer>false</organismsDiffer>
    <experiments>3</experiments>
</comment>
<comment type="interaction">
    <interactant intactId="EBI-742756">
        <id>P08727</id>
    </interactant>
    <interactant intactId="EBI-720609">
        <id>O76024</id>
        <label>WFS1</label>
    </interactant>
    <organismsDiffer>false</organismsDiffer>
    <experiments>3</experiments>
</comment>
<comment type="tissue specificity">
    <text evidence="10 14 15">Expressed in a defined zone of basal keratinocytes in the deep outer root sheath of hair follicles. Also observed in sweat gland and mammary gland ductal and secretory cells, bile ducts, gastrointestinal tract, bladder urothelium, oral epithelia, esophagus, ectocervical epithelium (at protein level). Expressed in epidermal basal cells, in nipple epidermis and a defined region of the hair follicle. Also seen in a subset of vascular wall cells in both the veins and artery of human umbilical cord, and in umbilical cord vascular smooth muscle. Observed in muscle fibers accumulating in the costameres of myoplasm at the sarcolemma in structures that contain dystrophin and spectrin.</text>
</comment>
<comment type="developmental stage">
    <text evidence="15">Present in hair follicles at all stages of development.</text>
</comment>
<comment type="domain">
    <text>This keratin differs from all other IF proteins in lacking the C-terminal tail domain.</text>
</comment>
<comment type="miscellaneous">
    <text>There are two types of cytoskeletal and microfibrillar keratin: I (acidic; 40-55 kDa) and II (neutral to basic; 56-70 kDa).</text>
</comment>
<comment type="similarity">
    <text evidence="3">Belongs to the intermediate filament family.</text>
</comment>
<evidence type="ECO:0000250" key="1">
    <source>
        <dbReference type="UniProtKB" id="P19001"/>
    </source>
</evidence>
<evidence type="ECO:0000250" key="2">
    <source>
        <dbReference type="UniProtKB" id="Q63279"/>
    </source>
</evidence>
<evidence type="ECO:0000255" key="3">
    <source>
        <dbReference type="PROSITE-ProRule" id="PRU01188"/>
    </source>
</evidence>
<evidence type="ECO:0000269" key="4">
    <source>
    </source>
</evidence>
<evidence type="ECO:0000269" key="5">
    <source>
    </source>
</evidence>
<evidence type="ECO:0000269" key="6">
    <source>
    </source>
</evidence>
<evidence type="ECO:0000269" key="7">
    <source>
    </source>
</evidence>
<evidence type="ECO:0000269" key="8">
    <source>
    </source>
</evidence>
<evidence type="ECO:0000269" key="9">
    <source>
    </source>
</evidence>
<evidence type="ECO:0000269" key="10">
    <source>
    </source>
</evidence>
<evidence type="ECO:0000269" key="11">
    <source>
    </source>
</evidence>
<evidence type="ECO:0000269" key="12">
    <source>
    </source>
</evidence>
<evidence type="ECO:0000269" key="13">
    <source>
    </source>
</evidence>
<evidence type="ECO:0000269" key="14">
    <source>
    </source>
</evidence>
<evidence type="ECO:0000269" key="15">
    <source>
    </source>
</evidence>
<evidence type="ECO:0000305" key="16"/>
<evidence type="ECO:0007744" key="17">
    <source>
    </source>
</evidence>
<evidence type="ECO:0007744" key="18">
    <source>
    </source>
</evidence>
<evidence type="ECO:0007744" key="19">
    <source>
    </source>
</evidence>
<keyword id="KW-0002">3D-structure</keyword>
<keyword id="KW-0175">Coiled coil</keyword>
<keyword id="KW-0903">Direct protein sequencing</keyword>
<keyword id="KW-0945">Host-virus interaction</keyword>
<keyword id="KW-0403">Intermediate filament</keyword>
<keyword id="KW-0416">Keratin</keyword>
<keyword id="KW-0488">Methylation</keyword>
<keyword id="KW-0597">Phosphoprotein</keyword>
<keyword id="KW-1267">Proteomics identification</keyword>
<keyword id="KW-1185">Reference proteome</keyword>
<protein>
    <recommendedName>
        <fullName>Keratin, type I cytoskeletal 19</fullName>
    </recommendedName>
    <alternativeName>
        <fullName>Cytokeratin-19</fullName>
        <shortName>CK-19</shortName>
    </alternativeName>
    <alternativeName>
        <fullName>Keratin-19</fullName>
        <shortName>K19</shortName>
    </alternativeName>
</protein>
<proteinExistence type="evidence at protein level"/>
<name>K1C19_HUMAN</name>
<organism>
    <name type="scientific">Homo sapiens</name>
    <name type="common">Human</name>
    <dbReference type="NCBI Taxonomy" id="9606"/>
    <lineage>
        <taxon>Eukaryota</taxon>
        <taxon>Metazoa</taxon>
        <taxon>Chordata</taxon>
        <taxon>Craniata</taxon>
        <taxon>Vertebrata</taxon>
        <taxon>Euteleostomi</taxon>
        <taxon>Mammalia</taxon>
        <taxon>Eutheria</taxon>
        <taxon>Euarchontoglires</taxon>
        <taxon>Primates</taxon>
        <taxon>Haplorrhini</taxon>
        <taxon>Catarrhini</taxon>
        <taxon>Hominidae</taxon>
        <taxon>Homo</taxon>
    </lineage>
</organism>
<gene>
    <name type="primary">KRT19</name>
</gene>
<sequence length="400" mass="44106">MTSYSYRQSSATSSFGGLGGGSVRFGPGVAFRAPSIHGGSGGRGVSVSSARFVSSSSSGAYGGGYGGVLTASDGLLAGNEKLTMQNLNDRLASYLDKVRALEAANGELEVKIRDWYQKQGPGPSRDYSHYYTTIQDLRDKILGATIENSRIVLQIDNARLAADDFRTKFETEQALRMSVEADINGLRRVLDELTLARTDLEMQIEGLKEELAYLKKNHEEEISTLRGQVGGQVSVEVDSAPGTDLAKILSDMRSQYEVMAEQNRKDAEAWFTSRTEELNREVAGHTEQLQMSRSEVTDLRRTLQGLEIELQSQLSMKAALEDTLAETEARFGAQLAHIQALISGIEAQLGDVRADSERQNQEYQRLMDIKSRLEQEIATYRSLLEGQEDHYNNLSASKVL</sequence>
<feature type="chain" id="PRO_0000063671" description="Keratin, type I cytoskeletal 19">
    <location>
        <begin position="1"/>
        <end position="400"/>
    </location>
</feature>
<feature type="domain" description="IF rod" evidence="3">
    <location>
        <begin position="80"/>
        <end position="391"/>
    </location>
</feature>
<feature type="region of interest" description="Head">
    <location>
        <begin position="1"/>
        <end position="79"/>
    </location>
</feature>
<feature type="region of interest" description="Coil 1A">
    <location>
        <begin position="80"/>
        <end position="115"/>
    </location>
</feature>
<feature type="region of interest" description="Linker 1">
    <location>
        <begin position="116"/>
        <end position="133"/>
    </location>
</feature>
<feature type="region of interest" description="Coil 1B">
    <location>
        <begin position="134"/>
        <end position="225"/>
    </location>
</feature>
<feature type="region of interest" description="Linker 12">
    <location>
        <begin position="226"/>
        <end position="248"/>
    </location>
</feature>
<feature type="region of interest" description="Necessary for interaction with PNN" evidence="6">
    <location>
        <begin position="244"/>
        <end position="390"/>
    </location>
</feature>
<feature type="region of interest" description="Coil 2">
    <location>
        <begin position="249"/>
        <end position="387"/>
    </location>
</feature>
<feature type="region of interest" description="Rod-like helical tail">
    <location>
        <begin position="388"/>
        <end position="400"/>
    </location>
</feature>
<feature type="site" description="Stutter">
    <location>
        <position position="267"/>
    </location>
</feature>
<feature type="site" description="Stutter">
    <location>
        <position position="327"/>
    </location>
</feature>
<feature type="modified residue" description="Omega-N-methylarginine" evidence="19">
    <location>
        <position position="7"/>
    </location>
</feature>
<feature type="modified residue" description="Phosphoserine" evidence="18">
    <location>
        <position position="14"/>
    </location>
</feature>
<feature type="modified residue" description="Phosphoserine" evidence="18">
    <location>
        <position position="22"/>
    </location>
</feature>
<feature type="modified residue" description="Asymmetric dimethylarginine; alternate" evidence="19">
    <location>
        <position position="24"/>
    </location>
</feature>
<feature type="modified residue" description="Omega-N-methylarginine; alternate" evidence="19">
    <location>
        <position position="24"/>
    </location>
</feature>
<feature type="modified residue" description="Omega-N-methylarginine" evidence="19">
    <location>
        <position position="32"/>
    </location>
</feature>
<feature type="modified residue" description="Phosphoserine" evidence="4">
    <location>
        <position position="35"/>
    </location>
</feature>
<feature type="modified residue" description="Phosphoserine" evidence="2">
    <location>
        <position position="40"/>
    </location>
</feature>
<feature type="modified residue" description="Omega-N-methylarginine" evidence="19">
    <location>
        <position position="43"/>
    </location>
</feature>
<feature type="modified residue" description="Omega-N-methylarginine" evidence="19">
    <location>
        <position position="51"/>
    </location>
</feature>
<feature type="modified residue" description="Phosphoserine" evidence="2">
    <location>
        <position position="57"/>
    </location>
</feature>
<feature type="modified residue" description="Phosphoserine" evidence="1">
    <location>
        <position position="72"/>
    </location>
</feature>
<feature type="modified residue" description="Phosphothreonine" evidence="18">
    <location>
        <position position="323"/>
    </location>
</feature>
<feature type="modified residue" description="Phosphotyrosine" evidence="11">
    <location>
        <position position="391"/>
    </location>
</feature>
<feature type="modified residue" description="Phosphoserine" evidence="18">
    <location>
        <position position="395"/>
    </location>
</feature>
<feature type="modified residue" description="Phosphoserine" evidence="18">
    <location>
        <position position="397"/>
    </location>
</feature>
<feature type="sequence variant" id="VAR_014629" description="In dbSNP:rs4602." evidence="5 7 8 12 13 15 17">
    <original>A</original>
    <variation>G</variation>
    <location>
        <position position="60"/>
    </location>
</feature>
<feature type="mutagenesis site" description="No effect on phosphorylation; no functional effect." evidence="4">
    <original>S</original>
    <variation>A</variation>
    <location>
        <position position="10"/>
    </location>
</feature>
<feature type="mutagenesis site" description="Abolishes phosphorylation; induces perinuclear collapse or short cytoplasmic filaments." evidence="4">
    <original>S</original>
    <variation>A</variation>
    <location>
        <position position="35"/>
    </location>
</feature>
<feature type="sequence conflict" description="In Ref. 1; CAA68556 and 5; AAF27048." evidence="16" ref="1 5">
    <original>G</original>
    <variation>A</variation>
    <location>
        <position position="350"/>
    </location>
</feature>
<reference key="1">
    <citation type="journal article" date="1987" name="Nucleic Acids Res.">
        <title>Sequence of cDNA coding for human keratin 19.</title>
        <authorList>
            <person name="Stasiak P.C."/>
            <person name="Lane E.B."/>
        </authorList>
    </citation>
    <scope>NUCLEOTIDE SEQUENCE [MRNA]</scope>
    <scope>VARIANT GLY-60</scope>
    <source>
        <tissue>Placenta</tissue>
    </source>
</reference>
<reference key="2">
    <citation type="journal article" date="1988" name="Eur. J. Cell Biol.">
        <title>Low level expression of cytokeratins 8, 18 and 19 in vascular smooth muscle cells of human umbilical cord and in cultured cells derived therefrom, with an analysis of the chromosomal locus containing the cytokeratin 19 gene.</title>
        <authorList>
            <person name="Bader B.L."/>
            <person name="Jahn L."/>
            <person name="Franke W.W."/>
        </authorList>
    </citation>
    <scope>NUCLEOTIDE SEQUENCE [GENOMIC DNA / MRNA]</scope>
    <scope>TISSUE SPECIFICITY</scope>
</reference>
<reference key="3">
    <citation type="journal article" date="1988" name="Proc. Natl. Acad. Sci. U.S.A.">
        <title>Sequence of the human 40-kDa keratin reveals an unusual structure with very high sequence identity to the corresponding bovine keratin.</title>
        <authorList>
            <person name="Eckert R.L."/>
        </authorList>
    </citation>
    <scope>NUCLEOTIDE SEQUENCE [GENOMIC DNA]</scope>
    <scope>VARIANT GLY-60</scope>
</reference>
<reference key="4">
    <citation type="journal article" date="1989" name="J. Invest. Dermatol.">
        <title>Keratin 19: predicted amino acid sequence and broad tissue distribution suggest it evolved from keratinocyte keratins.</title>
        <authorList>
            <person name="Stasiak P.C."/>
            <person name="Purkis P.E."/>
            <person name="Leigh I.M."/>
            <person name="Lane E.B."/>
        </authorList>
    </citation>
    <scope>NUCLEOTIDE SEQUENCE [MRNA]</scope>
    <scope>TISSUE SPECIFICITY</scope>
    <scope>DEVELOPMENTAL STAGE</scope>
    <scope>VARIANT GLY-60</scope>
    <source>
        <tissue>Placenta</tissue>
    </source>
</reference>
<reference key="5">
    <citation type="journal article" date="2000" name="Biochem. Biophys. Res. Commun.">
        <title>Genomic organization and amplification of the human keratin 15 and 19 genes.</title>
        <authorList>
            <person name="Whittock N.V."/>
            <person name="Eady R.A.J."/>
            <person name="McGrath J.A."/>
        </authorList>
    </citation>
    <scope>NUCLEOTIDE SEQUENCE [GENOMIC DNA]</scope>
    <scope>VARIANT GLY-60</scope>
</reference>
<reference key="6">
    <citation type="journal article" date="2004" name="Nat. Genet.">
        <title>Complete sequencing and characterization of 21,243 full-length human cDNAs.</title>
        <authorList>
            <person name="Ota T."/>
            <person name="Suzuki Y."/>
            <person name="Nishikawa T."/>
            <person name="Otsuki T."/>
            <person name="Sugiyama T."/>
            <person name="Irie R."/>
            <person name="Wakamatsu A."/>
            <person name="Hayashi K."/>
            <person name="Sato H."/>
            <person name="Nagai K."/>
            <person name="Kimura K."/>
            <person name="Makita H."/>
            <person name="Sekine M."/>
            <person name="Obayashi M."/>
            <person name="Nishi T."/>
            <person name="Shibahara T."/>
            <person name="Tanaka T."/>
            <person name="Ishii S."/>
            <person name="Yamamoto J."/>
            <person name="Saito K."/>
            <person name="Kawai Y."/>
            <person name="Isono Y."/>
            <person name="Nakamura Y."/>
            <person name="Nagahari K."/>
            <person name="Murakami K."/>
            <person name="Yasuda T."/>
            <person name="Iwayanagi T."/>
            <person name="Wagatsuma M."/>
            <person name="Shiratori A."/>
            <person name="Sudo H."/>
            <person name="Hosoiri T."/>
            <person name="Kaku Y."/>
            <person name="Kodaira H."/>
            <person name="Kondo H."/>
            <person name="Sugawara M."/>
            <person name="Takahashi M."/>
            <person name="Kanda K."/>
            <person name="Yokoi T."/>
            <person name="Furuya T."/>
            <person name="Kikkawa E."/>
            <person name="Omura Y."/>
            <person name="Abe K."/>
            <person name="Kamihara K."/>
            <person name="Katsuta N."/>
            <person name="Sato K."/>
            <person name="Tanikawa M."/>
            <person name="Yamazaki M."/>
            <person name="Ninomiya K."/>
            <person name="Ishibashi T."/>
            <person name="Yamashita H."/>
            <person name="Murakawa K."/>
            <person name="Fujimori K."/>
            <person name="Tanai H."/>
            <person name="Kimata M."/>
            <person name="Watanabe M."/>
            <person name="Hiraoka S."/>
            <person name="Chiba Y."/>
            <person name="Ishida S."/>
            <person name="Ono Y."/>
            <person name="Takiguchi S."/>
            <person name="Watanabe S."/>
            <person name="Yosida M."/>
            <person name="Hotuta T."/>
            <person name="Kusano J."/>
            <person name="Kanehori K."/>
            <person name="Takahashi-Fujii A."/>
            <person name="Hara H."/>
            <person name="Tanase T.-O."/>
            <person name="Nomura Y."/>
            <person name="Togiya S."/>
            <person name="Komai F."/>
            <person name="Hara R."/>
            <person name="Takeuchi K."/>
            <person name="Arita M."/>
            <person name="Imose N."/>
            <person name="Musashino K."/>
            <person name="Yuuki H."/>
            <person name="Oshima A."/>
            <person name="Sasaki N."/>
            <person name="Aotsuka S."/>
            <person name="Yoshikawa Y."/>
            <person name="Matsunawa H."/>
            <person name="Ichihara T."/>
            <person name="Shiohata N."/>
            <person name="Sano S."/>
            <person name="Moriya S."/>
            <person name="Momiyama H."/>
            <person name="Satoh N."/>
            <person name="Takami S."/>
            <person name="Terashima Y."/>
            <person name="Suzuki O."/>
            <person name="Nakagawa S."/>
            <person name="Senoh A."/>
            <person name="Mizoguchi H."/>
            <person name="Goto Y."/>
            <person name="Shimizu F."/>
            <person name="Wakebe H."/>
            <person name="Hishigaki H."/>
            <person name="Watanabe T."/>
            <person name="Sugiyama A."/>
            <person name="Takemoto M."/>
            <person name="Kawakami B."/>
            <person name="Yamazaki M."/>
            <person name="Watanabe K."/>
            <person name="Kumagai A."/>
            <person name="Itakura S."/>
            <person name="Fukuzumi Y."/>
            <person name="Fujimori Y."/>
            <person name="Komiyama M."/>
            <person name="Tashiro H."/>
            <person name="Tanigami A."/>
            <person name="Fujiwara T."/>
            <person name="Ono T."/>
            <person name="Yamada K."/>
            <person name="Fujii Y."/>
            <person name="Ozaki K."/>
            <person name="Hirao M."/>
            <person name="Ohmori Y."/>
            <person name="Kawabata A."/>
            <person name="Hikiji T."/>
            <person name="Kobatake N."/>
            <person name="Inagaki H."/>
            <person name="Ikema Y."/>
            <person name="Okamoto S."/>
            <person name="Okitani R."/>
            <person name="Kawakami T."/>
            <person name="Noguchi S."/>
            <person name="Itoh T."/>
            <person name="Shigeta K."/>
            <person name="Senba T."/>
            <person name="Matsumura K."/>
            <person name="Nakajima Y."/>
            <person name="Mizuno T."/>
            <person name="Morinaga M."/>
            <person name="Sasaki M."/>
            <person name="Togashi T."/>
            <person name="Oyama M."/>
            <person name="Hata H."/>
            <person name="Watanabe M."/>
            <person name="Komatsu T."/>
            <person name="Mizushima-Sugano J."/>
            <person name="Satoh T."/>
            <person name="Shirai Y."/>
            <person name="Takahashi Y."/>
            <person name="Nakagawa K."/>
            <person name="Okumura K."/>
            <person name="Nagase T."/>
            <person name="Nomura N."/>
            <person name="Kikuchi H."/>
            <person name="Masuho Y."/>
            <person name="Yamashita R."/>
            <person name="Nakai K."/>
            <person name="Yada T."/>
            <person name="Nakamura Y."/>
            <person name="Ohara O."/>
            <person name="Isogai T."/>
            <person name="Sugano S."/>
        </authorList>
    </citation>
    <scope>NUCLEOTIDE SEQUENCE [LARGE SCALE MRNA]</scope>
    <scope>VARIANT GLY-60</scope>
    <source>
        <tissue>Placenta</tissue>
    </source>
</reference>
<reference key="7">
    <citation type="journal article" date="2006" name="Nature">
        <title>DNA sequence of human chromosome 17 and analysis of rearrangement in the human lineage.</title>
        <authorList>
            <person name="Zody M.C."/>
            <person name="Garber M."/>
            <person name="Adams D.J."/>
            <person name="Sharpe T."/>
            <person name="Harrow J."/>
            <person name="Lupski J.R."/>
            <person name="Nicholson C."/>
            <person name="Searle S.M."/>
            <person name="Wilming L."/>
            <person name="Young S.K."/>
            <person name="Abouelleil A."/>
            <person name="Allen N.R."/>
            <person name="Bi W."/>
            <person name="Bloom T."/>
            <person name="Borowsky M.L."/>
            <person name="Bugalter B.E."/>
            <person name="Butler J."/>
            <person name="Chang J.L."/>
            <person name="Chen C.-K."/>
            <person name="Cook A."/>
            <person name="Corum B."/>
            <person name="Cuomo C.A."/>
            <person name="de Jong P.J."/>
            <person name="DeCaprio D."/>
            <person name="Dewar K."/>
            <person name="FitzGerald M."/>
            <person name="Gilbert J."/>
            <person name="Gibson R."/>
            <person name="Gnerre S."/>
            <person name="Goldstein S."/>
            <person name="Grafham D.V."/>
            <person name="Grocock R."/>
            <person name="Hafez N."/>
            <person name="Hagopian D.S."/>
            <person name="Hart E."/>
            <person name="Norman C.H."/>
            <person name="Humphray S."/>
            <person name="Jaffe D.B."/>
            <person name="Jones M."/>
            <person name="Kamal M."/>
            <person name="Khodiyar V.K."/>
            <person name="LaButti K."/>
            <person name="Laird G."/>
            <person name="Lehoczky J."/>
            <person name="Liu X."/>
            <person name="Lokyitsang T."/>
            <person name="Loveland J."/>
            <person name="Lui A."/>
            <person name="Macdonald P."/>
            <person name="Major J.E."/>
            <person name="Matthews L."/>
            <person name="Mauceli E."/>
            <person name="McCarroll S.A."/>
            <person name="Mihalev A.H."/>
            <person name="Mudge J."/>
            <person name="Nguyen C."/>
            <person name="Nicol R."/>
            <person name="O'Leary S.B."/>
            <person name="Osoegawa K."/>
            <person name="Schwartz D.C."/>
            <person name="Shaw-Smith C."/>
            <person name="Stankiewicz P."/>
            <person name="Steward C."/>
            <person name="Swarbreck D."/>
            <person name="Venkataraman V."/>
            <person name="Whittaker C.A."/>
            <person name="Yang X."/>
            <person name="Zimmer A.R."/>
            <person name="Bradley A."/>
            <person name="Hubbard T."/>
            <person name="Birren B.W."/>
            <person name="Rogers J."/>
            <person name="Lander E.S."/>
            <person name="Nusbaum C."/>
        </authorList>
    </citation>
    <scope>NUCLEOTIDE SEQUENCE [LARGE SCALE GENOMIC DNA]</scope>
</reference>
<reference key="8">
    <citation type="journal article" date="2004" name="Genome Res.">
        <title>The status, quality, and expansion of the NIH full-length cDNA project: the Mammalian Gene Collection (MGC).</title>
        <authorList>
            <consortium name="The MGC Project Team"/>
        </authorList>
    </citation>
    <scope>NUCLEOTIDE SEQUENCE [LARGE SCALE MRNA]</scope>
    <scope>VARIANT GLY-60</scope>
    <source>
        <tissue>Mammary gland</tissue>
        <tissue>Pancreas</tissue>
        <tissue>Placenta</tissue>
    </source>
</reference>
<reference key="9">
    <citation type="journal article" date="2001" name="J. Hepatol.">
        <title>Cloning and characterization of the 5'-flanking region of human cytokeratin 19 gene in human cholangiocarcinoma cell line.</title>
        <authorList>
            <person name="Kagaya M."/>
            <person name="Kaneko S."/>
            <person name="Ohno H."/>
            <person name="Inamura K."/>
            <person name="Kobayashi K."/>
        </authorList>
    </citation>
    <scope>NUCLEOTIDE SEQUENCE [GENOMIC DNA] OF 1-9</scope>
    <source>
        <tissue>Peripheral blood leukocyte</tissue>
    </source>
</reference>
<reference key="10">
    <citation type="journal article" date="1992" name="Electrophoresis">
        <title>Microsequences of 145 proteins recorded in the two-dimensional gel protein database of normal human epidermal keratinocytes.</title>
        <authorList>
            <person name="Rasmussen H.H."/>
            <person name="van Damme J."/>
            <person name="Puype M."/>
            <person name="Gesser B."/>
            <person name="Celis J.E."/>
            <person name="Vandekerckhove J."/>
        </authorList>
    </citation>
    <scope>PROTEIN SEQUENCE OF 25-31; 151-158 AND 227-237</scope>
    <source>
        <tissue>Keratinocyte</tissue>
    </source>
</reference>
<reference key="11">
    <citation type="journal article" date="2000" name="Seibutsu Butsuri Kagaku">
        <title>Diversity of keratin 19 gene expressed in lymph nodes of breast cancer patients -- strategy to clear the discrepancy between histological findings and RT-PCR results in the detection of micrometastasis.</title>
        <authorList>
            <person name="Sato T."/>
            <person name="Weerasinghe A."/>
            <person name="Kuwano Y."/>
            <person name="Kaneko T."/>
            <person name="Ikeda T."/>
            <person name="Nagai T."/>
            <person name="Makino H."/>
            <person name="Sano M."/>
            <person name="Honma K."/>
            <person name="Nemoto K."/>
            <person name="Abo T."/>
            <person name="Shima Y."/>
        </authorList>
    </citation>
    <scope>NUCLEOTIDE SEQUENCE [MRNA] OF 145-352</scope>
    <source>
        <tissue>Lymph node</tissue>
    </source>
</reference>
<reference key="12">
    <citation type="journal article" date="1999" name="J. Biol. Chem.">
        <title>Characterization of the major physiologic phosphorylation site of human keratin 19 and its role in filament organization.</title>
        <authorList>
            <person name="Zhou X."/>
            <person name="Liao J."/>
            <person name="Hu L."/>
            <person name="Feng L."/>
            <person name="Omary M.B."/>
        </authorList>
    </citation>
    <scope>PHOSPHORYLATION AT SER-35</scope>
    <scope>MUTAGENESIS OF SER-10 AND SER-35</scope>
</reference>
<reference key="13">
    <citation type="journal article" date="2000" name="J. Biol. Chem.">
        <title>Dissection of protein linkage between keratins and pinin, a protein with dual location at desmosome-intermediate filament complex and in the nucleus.</title>
        <authorList>
            <person name="Shi J."/>
            <person name="Sugrue S.P."/>
        </authorList>
    </citation>
    <scope>INTERACTION WITH PNN</scope>
</reference>
<reference key="14">
    <citation type="journal article" date="2005" name="Proteomics">
        <title>Proteomic profiling of cellular proteins interacting with the hepatitis C virus core protein.</title>
        <authorList>
            <person name="Kang S.-M."/>
            <person name="Shin M.-J."/>
            <person name="Kim J.-H."/>
            <person name="Oh J.-W."/>
        </authorList>
    </citation>
    <scope>INTERACTION WITH HEPATITIS C VIRUS CORE PROTEIN (MICROBIAL INFECTION)</scope>
</reference>
<reference key="15">
    <citation type="journal article" date="2005" name="Mol. Biol. Cell">
        <title>Specific interaction of the actin-binding domain of dystrophin with intermediate filaments containing keratin 19.</title>
        <authorList>
            <person name="Stone M.R."/>
            <person name="O'Neill A."/>
            <person name="Catino D."/>
            <person name="Bloch R.J."/>
        </authorList>
    </citation>
    <scope>FUNCTION</scope>
    <scope>INTERACTION WITH DMD</scope>
    <scope>TISSUE SPECIFICITY</scope>
</reference>
<reference key="16">
    <citation type="journal article" date="2010" name="PLoS ONE">
        <title>Characterization of in vivo keratin 19 phosphorylation on tyrosine-391.</title>
        <authorList>
            <person name="Zhou Q."/>
            <person name="Snider N.T."/>
            <person name="Liao J."/>
            <person name="Li D.H."/>
            <person name="Hong A."/>
            <person name="Ku N.O."/>
            <person name="Cartwright C.A."/>
            <person name="Omary M.B."/>
        </authorList>
    </citation>
    <scope>PHOSPHORYLATION AT TYR-391</scope>
</reference>
<reference key="17">
    <citation type="journal article" date="2012" name="Proc. Natl. Acad. Sci. U.S.A.">
        <title>N-terminal acetylome analyses and functional insights of the N-terminal acetyltransferase NatB.</title>
        <authorList>
            <person name="Van Damme P."/>
            <person name="Lasa M."/>
            <person name="Polevoda B."/>
            <person name="Gazquez C."/>
            <person name="Elosegui-Artola A."/>
            <person name="Kim D.S."/>
            <person name="De Juan-Pardo E."/>
            <person name="Demeyer K."/>
            <person name="Hole K."/>
            <person name="Larrea E."/>
            <person name="Timmerman E."/>
            <person name="Prieto J."/>
            <person name="Arnesen T."/>
            <person name="Sherman F."/>
            <person name="Gevaert K."/>
            <person name="Aldabe R."/>
        </authorList>
    </citation>
    <scope>IDENTIFICATION BY MASS SPECTROMETRY [LARGE SCALE ANALYSIS]</scope>
</reference>
<reference key="18">
    <citation type="journal article" date="2013" name="J. Proteome Res.">
        <title>Toward a comprehensive characterization of a human cancer cell phosphoproteome.</title>
        <authorList>
            <person name="Zhou H."/>
            <person name="Di Palma S."/>
            <person name="Preisinger C."/>
            <person name="Peng M."/>
            <person name="Polat A.N."/>
            <person name="Heck A.J."/>
            <person name="Mohammed S."/>
        </authorList>
    </citation>
    <scope>PHOSPHORYLATION [LARGE SCALE ANALYSIS] AT SER-14; SER-22; THR-323; SER-395 AND SER-397</scope>
    <scope>IDENTIFICATION BY MASS SPECTROMETRY [LARGE SCALE ANALYSIS]</scope>
    <source>
        <tissue>Cervix carcinoma</tissue>
        <tissue>Erythroleukemia</tissue>
    </source>
</reference>
<reference key="19">
    <citation type="journal article" date="2014" name="Mol. Cell. Proteomics">
        <title>Immunoaffinity enrichment and mass spectrometry analysis of protein methylation.</title>
        <authorList>
            <person name="Guo A."/>
            <person name="Gu H."/>
            <person name="Zhou J."/>
            <person name="Mulhern D."/>
            <person name="Wang Y."/>
            <person name="Lee K.A."/>
            <person name="Yang V."/>
            <person name="Aguiar M."/>
            <person name="Kornhauser J."/>
            <person name="Jia X."/>
            <person name="Ren J."/>
            <person name="Beausoleil S.A."/>
            <person name="Silva J.C."/>
            <person name="Vemulapalli V."/>
            <person name="Bedford M.T."/>
            <person name="Comb M.J."/>
        </authorList>
    </citation>
    <scope>METHYLATION [LARGE SCALE ANALYSIS] AT ARG-7; ARG-24; ARG-32; ARG-43 AND ARG-51</scope>
    <scope>IDENTIFICATION BY MASS SPECTROMETRY [LARGE SCALE ANALYSIS]</scope>
    <source>
        <tissue>Colon carcinoma</tissue>
    </source>
</reference>
<reference key="20">
    <citation type="journal article" date="2011" name="BMC Syst. Biol.">
        <title>Initial characterization of the human central proteome.</title>
        <authorList>
            <person name="Burkard T.R."/>
            <person name="Planyavsky M."/>
            <person name="Kaupe I."/>
            <person name="Breitwieser F.P."/>
            <person name="Buerckstuemmer T."/>
            <person name="Bennett K.L."/>
            <person name="Superti-Furga G."/>
            <person name="Colinge J."/>
        </authorList>
    </citation>
    <scope>VARIANT [LARGE SCALE ANALYSIS] GLY-60</scope>
    <scope>IDENTIFICATION BY MASS SPECTROMETRY [LARGE SCALE ANALYSIS]</scope>
</reference>
<dbReference type="EMBL" id="J03607">
    <property type="protein sequence ID" value="AAA36044.1"/>
    <property type="molecule type" value="Genomic_DNA"/>
</dbReference>
<dbReference type="EMBL" id="Y00503">
    <property type="protein sequence ID" value="CAA68556.1"/>
    <property type="molecule type" value="mRNA"/>
</dbReference>
<dbReference type="EMBL" id="AF202321">
    <property type="protein sequence ID" value="AAF27048.1"/>
    <property type="molecule type" value="Genomic_DNA"/>
</dbReference>
<dbReference type="EMBL" id="AK313261">
    <property type="protein sequence ID" value="BAG36071.1"/>
    <property type="molecule type" value="mRNA"/>
</dbReference>
<dbReference type="EMBL" id="AC019349">
    <property type="status" value="NOT_ANNOTATED_CDS"/>
    <property type="molecule type" value="Genomic_DNA"/>
</dbReference>
<dbReference type="EMBL" id="BC002539">
    <property type="protein sequence ID" value="AAH02539.3"/>
    <property type="molecule type" value="mRNA"/>
</dbReference>
<dbReference type="EMBL" id="BC007628">
    <property type="protein sequence ID" value="AAH07628.1"/>
    <property type="molecule type" value="mRNA"/>
</dbReference>
<dbReference type="EMBL" id="BC010409">
    <property type="protein sequence ID" value="AAH10409.3"/>
    <property type="molecule type" value="mRNA"/>
</dbReference>
<dbReference type="EMBL" id="BC067744">
    <property type="protein sequence ID" value="AAH67744.2"/>
    <property type="molecule type" value="mRNA"/>
</dbReference>
<dbReference type="EMBL" id="BC084574">
    <property type="protein sequence ID" value="AAH84574.2"/>
    <property type="molecule type" value="mRNA"/>
</dbReference>
<dbReference type="EMBL" id="AB045973">
    <property type="protein sequence ID" value="BAB40770.1"/>
    <property type="molecule type" value="Genomic_DNA"/>
</dbReference>
<dbReference type="EMBL" id="AB041267">
    <property type="protein sequence ID" value="BAA94607.1"/>
    <property type="molecule type" value="mRNA"/>
</dbReference>
<dbReference type="CCDS" id="CCDS11399.1"/>
<dbReference type="PIR" id="A31370">
    <property type="entry name" value="KRHU9"/>
</dbReference>
<dbReference type="RefSeq" id="NP_002267.2">
    <property type="nucleotide sequence ID" value="NM_002276.4"/>
</dbReference>
<dbReference type="PDB" id="8XTN">
    <property type="method" value="NMR"/>
    <property type="chains" value="A=6-38"/>
</dbReference>
<dbReference type="PDB" id="8XTO">
    <property type="method" value="NMR"/>
    <property type="chains" value="A=18-38"/>
</dbReference>
<dbReference type="PDB" id="8Y3S">
    <property type="method" value="NMR"/>
    <property type="chains" value="A=28-38"/>
</dbReference>
<dbReference type="PDB" id="8ZUG">
    <property type="method" value="NMR"/>
    <property type="chains" value="A=6-28"/>
</dbReference>
<dbReference type="PDBsum" id="8XTN"/>
<dbReference type="PDBsum" id="8XTO"/>
<dbReference type="PDBsum" id="8Y3S"/>
<dbReference type="PDBsum" id="8ZUG"/>
<dbReference type="SMR" id="P08727"/>
<dbReference type="BioGRID" id="110078">
    <property type="interactions" value="286"/>
</dbReference>
<dbReference type="DIP" id="DIP-35655N"/>
<dbReference type="FunCoup" id="P08727">
    <property type="interactions" value="311"/>
</dbReference>
<dbReference type="IntAct" id="P08727">
    <property type="interactions" value="101"/>
</dbReference>
<dbReference type="MINT" id="P08727"/>
<dbReference type="STRING" id="9606.ENSP00000355124"/>
<dbReference type="GlyGen" id="P08727">
    <property type="glycosylation" value="3 sites, 1 O-linked glycan (3 sites)"/>
</dbReference>
<dbReference type="iPTMnet" id="P08727"/>
<dbReference type="PhosphoSitePlus" id="P08727"/>
<dbReference type="SwissPalm" id="P08727"/>
<dbReference type="BioMuta" id="KRT19"/>
<dbReference type="DMDM" id="311033484"/>
<dbReference type="CPTAC" id="CPTAC-1522"/>
<dbReference type="CPTAC" id="CPTAC-1523"/>
<dbReference type="jPOST" id="P08727"/>
<dbReference type="MassIVE" id="P08727"/>
<dbReference type="PaxDb" id="9606-ENSP00000355124"/>
<dbReference type="PeptideAtlas" id="P08727"/>
<dbReference type="PRIDE" id="P08727"/>
<dbReference type="ProteomicsDB" id="52162"/>
<dbReference type="ABCD" id="P08727">
    <property type="antibodies" value="1 sequenced antibody"/>
</dbReference>
<dbReference type="Antibodypedia" id="1224">
    <property type="antibodies" value="3455 antibodies from 57 providers"/>
</dbReference>
<dbReference type="DNASU" id="3880"/>
<dbReference type="Ensembl" id="ENST00000361566.7">
    <property type="protein sequence ID" value="ENSP00000355124.3"/>
    <property type="gene ID" value="ENSG00000171345.13"/>
</dbReference>
<dbReference type="GeneID" id="3880"/>
<dbReference type="KEGG" id="hsa:3880"/>
<dbReference type="MANE-Select" id="ENST00000361566.7">
    <property type="protein sequence ID" value="ENSP00000355124.3"/>
    <property type="RefSeq nucleotide sequence ID" value="NM_002276.5"/>
    <property type="RefSeq protein sequence ID" value="NP_002267.2"/>
</dbReference>
<dbReference type="UCSC" id="uc002hxd.5">
    <property type="organism name" value="human"/>
</dbReference>
<dbReference type="AGR" id="HGNC:6436"/>
<dbReference type="CTD" id="3880"/>
<dbReference type="DisGeNET" id="3880"/>
<dbReference type="GeneCards" id="KRT19"/>
<dbReference type="HGNC" id="HGNC:6436">
    <property type="gene designation" value="KRT19"/>
</dbReference>
<dbReference type="HPA" id="ENSG00000171345">
    <property type="expression patterns" value="Tissue enhanced (esophagus, salivary gland)"/>
</dbReference>
<dbReference type="MIM" id="148020">
    <property type="type" value="gene"/>
</dbReference>
<dbReference type="neXtProt" id="NX_P08727"/>
<dbReference type="OpenTargets" id="ENSG00000171345"/>
<dbReference type="PharmGKB" id="PA30225"/>
<dbReference type="VEuPathDB" id="HostDB:ENSG00000171345"/>
<dbReference type="eggNOG" id="ENOG502QV0B">
    <property type="taxonomic scope" value="Eukaryota"/>
</dbReference>
<dbReference type="GeneTree" id="ENSGT00940000155258"/>
<dbReference type="HOGENOM" id="CLU_012560_8_1_1"/>
<dbReference type="InParanoid" id="P08727"/>
<dbReference type="OMA" id="DQESWFN"/>
<dbReference type="OrthoDB" id="2441647at2759"/>
<dbReference type="PAN-GO" id="P08727">
    <property type="GO annotations" value="3 GO annotations based on evolutionary models"/>
</dbReference>
<dbReference type="PhylomeDB" id="P08727"/>
<dbReference type="TreeFam" id="TF332742"/>
<dbReference type="PathwayCommons" id="P08727"/>
<dbReference type="Reactome" id="R-HSA-6805567">
    <property type="pathway name" value="Keratinization"/>
</dbReference>
<dbReference type="Reactome" id="R-HSA-6809371">
    <property type="pathway name" value="Formation of the cornified envelope"/>
</dbReference>
<dbReference type="Reactome" id="R-HSA-9725554">
    <property type="pathway name" value="Differentiation of Keratinocytes in Interfollicular Epidermis in Mammalian Skin"/>
</dbReference>
<dbReference type="SignaLink" id="P08727"/>
<dbReference type="SIGNOR" id="P08727"/>
<dbReference type="BioGRID-ORCS" id="3880">
    <property type="hits" value="10 hits in 1151 CRISPR screens"/>
</dbReference>
<dbReference type="ChiTaRS" id="KRT19">
    <property type="organism name" value="human"/>
</dbReference>
<dbReference type="GeneWiki" id="Keratin_19"/>
<dbReference type="GenomeRNAi" id="3880"/>
<dbReference type="Pharos" id="P08727">
    <property type="development level" value="Tbio"/>
</dbReference>
<dbReference type="PRO" id="PR:P08727"/>
<dbReference type="Proteomes" id="UP000005640">
    <property type="component" value="Chromosome 17"/>
</dbReference>
<dbReference type="RNAct" id="P08727">
    <property type="molecule type" value="protein"/>
</dbReference>
<dbReference type="Bgee" id="ENSG00000171345">
    <property type="expression patterns" value="Expressed in palpebral conjunctiva and 162 other cell types or tissues"/>
</dbReference>
<dbReference type="ExpressionAtlas" id="P08727">
    <property type="expression patterns" value="baseline and differential"/>
</dbReference>
<dbReference type="GO" id="GO:0016327">
    <property type="term" value="C:apicolateral plasma membrane"/>
    <property type="evidence" value="ECO:0007669"/>
    <property type="project" value="Ensembl"/>
</dbReference>
<dbReference type="GO" id="GO:0071944">
    <property type="term" value="C:cell periphery"/>
    <property type="evidence" value="ECO:0000314"/>
    <property type="project" value="MGI"/>
</dbReference>
<dbReference type="GO" id="GO:0043034">
    <property type="term" value="C:costamere"/>
    <property type="evidence" value="ECO:0000314"/>
    <property type="project" value="UniProtKB"/>
</dbReference>
<dbReference type="GO" id="GO:0005856">
    <property type="term" value="C:cytoskeleton"/>
    <property type="evidence" value="ECO:0000318"/>
    <property type="project" value="GO_Central"/>
</dbReference>
<dbReference type="GO" id="GO:0005829">
    <property type="term" value="C:cytosol"/>
    <property type="evidence" value="ECO:0000304"/>
    <property type="project" value="Reactome"/>
</dbReference>
<dbReference type="GO" id="GO:0016010">
    <property type="term" value="C:dystrophin-associated glycoprotein complex"/>
    <property type="evidence" value="ECO:0007669"/>
    <property type="project" value="Ensembl"/>
</dbReference>
<dbReference type="GO" id="GO:0070062">
    <property type="term" value="C:extracellular exosome"/>
    <property type="evidence" value="ECO:0007005"/>
    <property type="project" value="UniProtKB"/>
</dbReference>
<dbReference type="GO" id="GO:0005882">
    <property type="term" value="C:intermediate filament"/>
    <property type="evidence" value="ECO:0000304"/>
    <property type="project" value="ProtInc"/>
</dbReference>
<dbReference type="GO" id="GO:0005886">
    <property type="term" value="C:plasma membrane"/>
    <property type="evidence" value="ECO:0000314"/>
    <property type="project" value="CACAO"/>
</dbReference>
<dbReference type="GO" id="GO:0042383">
    <property type="term" value="C:sarcolemma"/>
    <property type="evidence" value="ECO:0007669"/>
    <property type="project" value="Ensembl"/>
</dbReference>
<dbReference type="GO" id="GO:1990357">
    <property type="term" value="C:terminal web"/>
    <property type="evidence" value="ECO:0007669"/>
    <property type="project" value="Ensembl"/>
</dbReference>
<dbReference type="GO" id="GO:0030018">
    <property type="term" value="C:Z disc"/>
    <property type="evidence" value="ECO:0007669"/>
    <property type="project" value="Ensembl"/>
</dbReference>
<dbReference type="GO" id="GO:0044877">
    <property type="term" value="F:protein-containing complex binding"/>
    <property type="evidence" value="ECO:0007669"/>
    <property type="project" value="Ensembl"/>
</dbReference>
<dbReference type="GO" id="GO:0005200">
    <property type="term" value="F:structural constituent of cytoskeleton"/>
    <property type="evidence" value="ECO:0000304"/>
    <property type="project" value="ProtInc"/>
</dbReference>
<dbReference type="GO" id="GO:0008307">
    <property type="term" value="F:structural constituent of muscle"/>
    <property type="evidence" value="ECO:0000314"/>
    <property type="project" value="UniProtKB"/>
</dbReference>
<dbReference type="GO" id="GO:0060706">
    <property type="term" value="P:cell differentiation involved in embryonic placenta development"/>
    <property type="evidence" value="ECO:0007669"/>
    <property type="project" value="Ensembl"/>
</dbReference>
<dbReference type="GO" id="GO:0030855">
    <property type="term" value="P:epithelial cell differentiation"/>
    <property type="evidence" value="ECO:0000318"/>
    <property type="project" value="GO_Central"/>
</dbReference>
<dbReference type="GO" id="GO:0045109">
    <property type="term" value="P:intermediate filament organization"/>
    <property type="evidence" value="ECO:0000318"/>
    <property type="project" value="GO_Central"/>
</dbReference>
<dbReference type="GO" id="GO:0007219">
    <property type="term" value="P:Notch signaling pathway"/>
    <property type="evidence" value="ECO:0007669"/>
    <property type="project" value="Ensembl"/>
</dbReference>
<dbReference type="GO" id="GO:0043627">
    <property type="term" value="P:response to estrogen"/>
    <property type="evidence" value="ECO:0000270"/>
    <property type="project" value="UniProtKB"/>
</dbReference>
<dbReference type="GO" id="GO:0045214">
    <property type="term" value="P:sarcomere organization"/>
    <property type="evidence" value="ECO:0000314"/>
    <property type="project" value="UniProtKB"/>
</dbReference>
<dbReference type="FunFam" id="1.20.5.1160:FF:000002">
    <property type="entry name" value="Type I keratin 10"/>
    <property type="match status" value="1"/>
</dbReference>
<dbReference type="FunFam" id="1.20.5.170:FF:000002">
    <property type="entry name" value="Type I keratin KA11"/>
    <property type="match status" value="1"/>
</dbReference>
<dbReference type="FunFam" id="1.20.5.500:FF:000001">
    <property type="entry name" value="Type II keratin 23"/>
    <property type="match status" value="1"/>
</dbReference>
<dbReference type="Gene3D" id="1.20.5.170">
    <property type="match status" value="1"/>
</dbReference>
<dbReference type="Gene3D" id="1.20.5.500">
    <property type="entry name" value="Single helix bin"/>
    <property type="match status" value="1"/>
</dbReference>
<dbReference type="Gene3D" id="1.20.5.1160">
    <property type="entry name" value="Vasodilator-stimulated phosphoprotein"/>
    <property type="match status" value="1"/>
</dbReference>
<dbReference type="InterPro" id="IPR018039">
    <property type="entry name" value="IF_conserved"/>
</dbReference>
<dbReference type="InterPro" id="IPR039008">
    <property type="entry name" value="IF_rod_dom"/>
</dbReference>
<dbReference type="InterPro" id="IPR002957">
    <property type="entry name" value="Keratin_I"/>
</dbReference>
<dbReference type="PANTHER" id="PTHR23239">
    <property type="entry name" value="INTERMEDIATE FILAMENT"/>
    <property type="match status" value="1"/>
</dbReference>
<dbReference type="PANTHER" id="PTHR23239:SF14">
    <property type="entry name" value="KERATIN, TYPE I CYTOSKELETAL 19"/>
    <property type="match status" value="1"/>
</dbReference>
<dbReference type="Pfam" id="PF00038">
    <property type="entry name" value="Filament"/>
    <property type="match status" value="1"/>
</dbReference>
<dbReference type="PRINTS" id="PR01248">
    <property type="entry name" value="TYPE1KERATIN"/>
</dbReference>
<dbReference type="SMART" id="SM01391">
    <property type="entry name" value="Filament"/>
    <property type="match status" value="1"/>
</dbReference>
<dbReference type="SUPFAM" id="SSF64593">
    <property type="entry name" value="Intermediate filament protein, coiled coil region"/>
    <property type="match status" value="2"/>
</dbReference>
<dbReference type="SUPFAM" id="SSF46579">
    <property type="entry name" value="Prefoldin"/>
    <property type="match status" value="1"/>
</dbReference>
<dbReference type="PROSITE" id="PS00226">
    <property type="entry name" value="IF_ROD_1"/>
    <property type="match status" value="1"/>
</dbReference>
<dbReference type="PROSITE" id="PS51842">
    <property type="entry name" value="IF_ROD_2"/>
    <property type="match status" value="1"/>
</dbReference>
<accession>P08727</accession>
<accession>B2R874</accession>
<accession>Q5XG83</accession>
<accession>Q6NW33</accession>
<accession>Q7L5M9</accession>
<accession>Q96A53</accession>
<accession>Q96FV1</accession>
<accession>Q9BYF9</accession>
<accession>Q9P1Y4</accession>